<protein>
    <recommendedName>
        <fullName evidence="1">Citrate lyase acyl carrier protein</fullName>
    </recommendedName>
    <alternativeName>
        <fullName evidence="1">Citrate lyase gamma chain</fullName>
    </alternativeName>
</protein>
<organism>
    <name type="scientific">Enterobacter sp. (strain 638)</name>
    <dbReference type="NCBI Taxonomy" id="399742"/>
    <lineage>
        <taxon>Bacteria</taxon>
        <taxon>Pseudomonadati</taxon>
        <taxon>Pseudomonadota</taxon>
        <taxon>Gammaproteobacteria</taxon>
        <taxon>Enterobacterales</taxon>
        <taxon>Enterobacteriaceae</taxon>
        <taxon>Enterobacter</taxon>
    </lineage>
</organism>
<name>CITD_ENT38</name>
<sequence>MKIVREALAGTQESSDLMVKIAPADGELEIVIHSEVIKQFGDQIRQVVNETLHALAVRQGLIIVEDKGALDCVIRARLQSAVLRAAEEQPIDWSKMS</sequence>
<proteinExistence type="inferred from homology"/>
<gene>
    <name evidence="1" type="primary">citD</name>
    <name type="ordered locus">Ent638_3374</name>
</gene>
<evidence type="ECO:0000255" key="1">
    <source>
        <dbReference type="HAMAP-Rule" id="MF_00805"/>
    </source>
</evidence>
<reference key="1">
    <citation type="journal article" date="2010" name="PLoS Genet.">
        <title>Genome sequence of the plant growth promoting endophytic bacterium Enterobacter sp. 638.</title>
        <authorList>
            <person name="Taghavi S."/>
            <person name="van der Lelie D."/>
            <person name="Hoffman A."/>
            <person name="Zhang Y.B."/>
            <person name="Walla M.D."/>
            <person name="Vangronsveld J."/>
            <person name="Newman L."/>
            <person name="Monchy S."/>
        </authorList>
    </citation>
    <scope>NUCLEOTIDE SEQUENCE [LARGE SCALE GENOMIC DNA]</scope>
    <source>
        <strain>638</strain>
    </source>
</reference>
<dbReference type="EMBL" id="CP000653">
    <property type="protein sequence ID" value="ABP62036.1"/>
    <property type="molecule type" value="Genomic_DNA"/>
</dbReference>
<dbReference type="RefSeq" id="WP_015960364.1">
    <property type="nucleotide sequence ID" value="NC_009436.1"/>
</dbReference>
<dbReference type="SMR" id="A4WEA6"/>
<dbReference type="STRING" id="399742.Ent638_3374"/>
<dbReference type="KEGG" id="ent:Ent638_3374"/>
<dbReference type="eggNOG" id="COG3052">
    <property type="taxonomic scope" value="Bacteria"/>
</dbReference>
<dbReference type="HOGENOM" id="CLU_158489_0_0_6"/>
<dbReference type="OrthoDB" id="9798736at2"/>
<dbReference type="Proteomes" id="UP000000230">
    <property type="component" value="Chromosome"/>
</dbReference>
<dbReference type="GO" id="GO:0005737">
    <property type="term" value="C:cytoplasm"/>
    <property type="evidence" value="ECO:0007669"/>
    <property type="project" value="UniProtKB-SubCell"/>
</dbReference>
<dbReference type="HAMAP" id="MF_00805">
    <property type="entry name" value="CitD"/>
    <property type="match status" value="1"/>
</dbReference>
<dbReference type="InterPro" id="IPR006495">
    <property type="entry name" value="CitD"/>
</dbReference>
<dbReference type="InterPro" id="IPR023439">
    <property type="entry name" value="Mal_deCO2ase/Cit_lyase_ACP"/>
</dbReference>
<dbReference type="NCBIfam" id="TIGR01608">
    <property type="entry name" value="citD"/>
    <property type="match status" value="1"/>
</dbReference>
<dbReference type="NCBIfam" id="NF009726">
    <property type="entry name" value="PRK13253.1"/>
    <property type="match status" value="1"/>
</dbReference>
<dbReference type="Pfam" id="PF06857">
    <property type="entry name" value="ACP"/>
    <property type="match status" value="1"/>
</dbReference>
<dbReference type="PIRSF" id="PIRSF002736">
    <property type="entry name" value="Citrt_lyas_gamma"/>
    <property type="match status" value="1"/>
</dbReference>
<accession>A4WEA6</accession>
<keyword id="KW-0963">Cytoplasm</keyword>
<keyword id="KW-0597">Phosphoprotein</keyword>
<comment type="function">
    <text evidence="1">Covalent carrier of the coenzyme of citrate lyase.</text>
</comment>
<comment type="subunit">
    <text evidence="1">Oligomer with a subunit composition of (alpha,beta,gamma)6.</text>
</comment>
<comment type="subcellular location">
    <subcellularLocation>
        <location evidence="1">Cytoplasm</location>
    </subcellularLocation>
</comment>
<comment type="similarity">
    <text evidence="1">Belongs to the CitD family.</text>
</comment>
<feature type="chain" id="PRO_1000062274" description="Citrate lyase acyl carrier protein">
    <location>
        <begin position="1"/>
        <end position="97"/>
    </location>
</feature>
<feature type="modified residue" description="O-(phosphoribosyl dephospho-coenzyme A)serine" evidence="1">
    <location>
        <position position="14"/>
    </location>
</feature>